<geneLocation type="plasmid">
    <name>IncP-alpha RK2</name>
</geneLocation>
<sequence>MSKIIKFPGVEVEAEAPAPRVEAPSKAPPRFTFAKGVQALVRFVWVVTVLVWPVAKWIISIDVFFQFLRMLYHWNTLGVHAGWTFLVHFAVLTALTYFVSLYKPKGL</sequence>
<organism>
    <name type="scientific">Escherichia coli</name>
    <dbReference type="NCBI Taxonomy" id="562"/>
    <lineage>
        <taxon>Bacteria</taxon>
        <taxon>Pseudomonadati</taxon>
        <taxon>Pseudomonadota</taxon>
        <taxon>Gammaproteobacteria</taxon>
        <taxon>Enterobacterales</taxon>
        <taxon>Enterobacteriaceae</taxon>
        <taxon>Escherichia</taxon>
    </lineage>
</organism>
<dbReference type="EMBL" id="L18919">
    <property type="protein sequence ID" value="AAA92770.1"/>
    <property type="molecule type" value="Genomic_DNA"/>
</dbReference>
<dbReference type="EMBL" id="L13287">
    <property type="protein sequence ID" value="AAA73870.1"/>
    <property type="molecule type" value="Genomic_DNA"/>
</dbReference>
<dbReference type="RefSeq" id="WP_011645016.1">
    <property type="nucleotide sequence ID" value="NZ_VMTS01000048.1"/>
</dbReference>
<dbReference type="SMR" id="Q57270"/>
<dbReference type="InterPro" id="IPR035362">
    <property type="entry name" value="KleE"/>
</dbReference>
<dbReference type="Pfam" id="PF17394">
    <property type="entry name" value="KleE"/>
    <property type="match status" value="1"/>
</dbReference>
<gene>
    <name type="primary">kleE</name>
    <name type="synonym">kcrB3</name>
</gene>
<proteinExistence type="predicted"/>
<keyword id="KW-0614">Plasmid</keyword>
<accession>Q57270</accession>
<reference key="1">
    <citation type="journal article" date="1993" name="J. Bacteriol.">
        <title>kil-kor regulon of promiscuous plasmid RK2: structure, products, and regulation of two operons that constitute the kilE locus.</title>
        <authorList>
            <person name="Kornacki J.A."/>
            <person name="Chang C.-H."/>
            <person name="Figurski D.H."/>
        </authorList>
    </citation>
    <scope>NUCLEOTIDE SEQUENCE [GENOMIC DNA]</scope>
</reference>
<reference key="2">
    <citation type="journal article" date="1995" name="Microbiology">
        <title>Evolution of the korA-oriV segment of promiscuous IncP plasmids.</title>
        <authorList>
            <person name="Thomas C.M."/>
            <person name="Smith C.A."/>
            <person name="Ibbotson J.P."/>
            <person name="Johnston L."/>
            <person name="Wang N."/>
        </authorList>
    </citation>
    <scope>NUCLEOTIDE SEQUENCE [GENOMIC DNA]</scope>
</reference>
<name>KLEE2_ECOLX</name>
<protein>
    <recommendedName>
        <fullName>Protein KleE</fullName>
    </recommendedName>
    <alternativeName>
        <fullName>KcrB3 protein</fullName>
    </alternativeName>
</protein>
<feature type="chain" id="PRO_0000068372" description="Protein KleE">
    <location>
        <begin position="1"/>
        <end position="107"/>
    </location>
</feature>